<keyword id="KW-0687">Ribonucleoprotein</keyword>
<keyword id="KW-0689">Ribosomal protein</keyword>
<comment type="similarity">
    <text evidence="1">Belongs to the bacterial ribosomal protein bS21 family.</text>
</comment>
<organism>
    <name type="scientific">Prochlorococcus marinus (strain MIT 9515)</name>
    <dbReference type="NCBI Taxonomy" id="167542"/>
    <lineage>
        <taxon>Bacteria</taxon>
        <taxon>Bacillati</taxon>
        <taxon>Cyanobacteriota</taxon>
        <taxon>Cyanophyceae</taxon>
        <taxon>Synechococcales</taxon>
        <taxon>Prochlorococcaceae</taxon>
        <taxon>Prochlorococcus</taxon>
    </lineage>
</organism>
<name>RS21_PROM5</name>
<proteinExistence type="inferred from homology"/>
<protein>
    <recommendedName>
        <fullName evidence="1">Small ribosomal subunit protein bS21</fullName>
    </recommendedName>
    <alternativeName>
        <fullName evidence="2">30S ribosomal protein S21</fullName>
    </alternativeName>
</protein>
<accession>A2BWW2</accession>
<reference key="1">
    <citation type="journal article" date="2007" name="PLoS Genet.">
        <title>Patterns and implications of gene gain and loss in the evolution of Prochlorococcus.</title>
        <authorList>
            <person name="Kettler G.C."/>
            <person name="Martiny A.C."/>
            <person name="Huang K."/>
            <person name="Zucker J."/>
            <person name="Coleman M.L."/>
            <person name="Rodrigue S."/>
            <person name="Chen F."/>
            <person name="Lapidus A."/>
            <person name="Ferriera S."/>
            <person name="Johnson J."/>
            <person name="Steglich C."/>
            <person name="Church G.M."/>
            <person name="Richardson P."/>
            <person name="Chisholm S.W."/>
        </authorList>
    </citation>
    <scope>NUCLEOTIDE SEQUENCE [LARGE SCALE GENOMIC DNA]</scope>
    <source>
        <strain>MIT 9515</strain>
    </source>
</reference>
<sequence>MTQVTVGENEGIESALRRFKRQVSKSGIFADLKRLRHHETPIEKYKRKLQQRRKARRR</sequence>
<feature type="chain" id="PRO_1000005152" description="Small ribosomal subunit protein bS21">
    <location>
        <begin position="1"/>
        <end position="58"/>
    </location>
</feature>
<gene>
    <name evidence="1" type="primary">rpsU</name>
    <name evidence="1" type="synonym">rps21</name>
    <name type="ordered locus">P9515_10661</name>
</gene>
<evidence type="ECO:0000255" key="1">
    <source>
        <dbReference type="HAMAP-Rule" id="MF_00358"/>
    </source>
</evidence>
<evidence type="ECO:0000305" key="2"/>
<dbReference type="EMBL" id="CP000552">
    <property type="protein sequence ID" value="ABM72273.1"/>
    <property type="molecule type" value="Genomic_DNA"/>
</dbReference>
<dbReference type="RefSeq" id="WP_002806486.1">
    <property type="nucleotide sequence ID" value="NC_008817.1"/>
</dbReference>
<dbReference type="SMR" id="A2BWW2"/>
<dbReference type="STRING" id="167542.P9515_10661"/>
<dbReference type="GeneID" id="60201694"/>
<dbReference type="KEGG" id="pmc:P9515_10661"/>
<dbReference type="eggNOG" id="COG0828">
    <property type="taxonomic scope" value="Bacteria"/>
</dbReference>
<dbReference type="HOGENOM" id="CLU_159258_3_1_3"/>
<dbReference type="OrthoDB" id="9799244at2"/>
<dbReference type="Proteomes" id="UP000001589">
    <property type="component" value="Chromosome"/>
</dbReference>
<dbReference type="GO" id="GO:1990904">
    <property type="term" value="C:ribonucleoprotein complex"/>
    <property type="evidence" value="ECO:0007669"/>
    <property type="project" value="UniProtKB-KW"/>
</dbReference>
<dbReference type="GO" id="GO:0005840">
    <property type="term" value="C:ribosome"/>
    <property type="evidence" value="ECO:0007669"/>
    <property type="project" value="UniProtKB-KW"/>
</dbReference>
<dbReference type="GO" id="GO:0003735">
    <property type="term" value="F:structural constituent of ribosome"/>
    <property type="evidence" value="ECO:0007669"/>
    <property type="project" value="InterPro"/>
</dbReference>
<dbReference type="GO" id="GO:0006412">
    <property type="term" value="P:translation"/>
    <property type="evidence" value="ECO:0007669"/>
    <property type="project" value="UniProtKB-UniRule"/>
</dbReference>
<dbReference type="Gene3D" id="1.20.5.1150">
    <property type="entry name" value="Ribosomal protein S8"/>
    <property type="match status" value="1"/>
</dbReference>
<dbReference type="HAMAP" id="MF_00358">
    <property type="entry name" value="Ribosomal_bS21"/>
    <property type="match status" value="1"/>
</dbReference>
<dbReference type="InterPro" id="IPR001911">
    <property type="entry name" value="Ribosomal_bS21"/>
</dbReference>
<dbReference type="InterPro" id="IPR018278">
    <property type="entry name" value="Ribosomal_bS21_CS"/>
</dbReference>
<dbReference type="InterPro" id="IPR038380">
    <property type="entry name" value="Ribosomal_bS21_sf"/>
</dbReference>
<dbReference type="NCBIfam" id="TIGR00030">
    <property type="entry name" value="S21p"/>
    <property type="match status" value="1"/>
</dbReference>
<dbReference type="PANTHER" id="PTHR21109">
    <property type="entry name" value="MITOCHONDRIAL 28S RIBOSOMAL PROTEIN S21"/>
    <property type="match status" value="1"/>
</dbReference>
<dbReference type="PANTHER" id="PTHR21109:SF0">
    <property type="entry name" value="SMALL RIBOSOMAL SUBUNIT PROTEIN BS21M"/>
    <property type="match status" value="1"/>
</dbReference>
<dbReference type="Pfam" id="PF01165">
    <property type="entry name" value="Ribosomal_S21"/>
    <property type="match status" value="1"/>
</dbReference>
<dbReference type="PRINTS" id="PR00976">
    <property type="entry name" value="RIBOSOMALS21"/>
</dbReference>
<dbReference type="PROSITE" id="PS01181">
    <property type="entry name" value="RIBOSOMAL_S21"/>
    <property type="match status" value="1"/>
</dbReference>